<proteinExistence type="inferred from homology"/>
<dbReference type="EMBL" id="AE015451">
    <property type="protein sequence ID" value="AAN65767.1"/>
    <property type="molecule type" value="Genomic_DNA"/>
</dbReference>
<dbReference type="RefSeq" id="NP_742303.1">
    <property type="nucleotide sequence ID" value="NC_002947.4"/>
</dbReference>
<dbReference type="RefSeq" id="WP_010951528.1">
    <property type="nucleotide sequence ID" value="NZ_CP169744.1"/>
</dbReference>
<dbReference type="SMR" id="Q88RJ6"/>
<dbReference type="STRING" id="160488.PP_0133"/>
<dbReference type="PaxDb" id="160488-PP_0133"/>
<dbReference type="GeneID" id="83677379"/>
<dbReference type="KEGG" id="ppu:PP_0133"/>
<dbReference type="PATRIC" id="fig|160488.4.peg.135"/>
<dbReference type="eggNOG" id="COG2204">
    <property type="taxonomic scope" value="Bacteria"/>
</dbReference>
<dbReference type="HOGENOM" id="CLU_000445_0_6_6"/>
<dbReference type="OrthoDB" id="9804019at2"/>
<dbReference type="PhylomeDB" id="Q88RJ6"/>
<dbReference type="BioCyc" id="PPUT160488:G1G01-139-MONOMER"/>
<dbReference type="UniPathway" id="UPA00286"/>
<dbReference type="Proteomes" id="UP000000556">
    <property type="component" value="Chromosome"/>
</dbReference>
<dbReference type="GO" id="GO:0005524">
    <property type="term" value="F:ATP binding"/>
    <property type="evidence" value="ECO:0007669"/>
    <property type="project" value="UniProtKB-KW"/>
</dbReference>
<dbReference type="GO" id="GO:0016887">
    <property type="term" value="F:ATP hydrolysis activity"/>
    <property type="evidence" value="ECO:0007669"/>
    <property type="project" value="InterPro"/>
</dbReference>
<dbReference type="GO" id="GO:0043565">
    <property type="term" value="F:sequence-specific DNA binding"/>
    <property type="evidence" value="ECO:0007669"/>
    <property type="project" value="InterPro"/>
</dbReference>
<dbReference type="GO" id="GO:0042121">
    <property type="term" value="P:alginic acid biosynthetic process"/>
    <property type="evidence" value="ECO:0007669"/>
    <property type="project" value="UniProtKB-UniPathway"/>
</dbReference>
<dbReference type="GO" id="GO:0000160">
    <property type="term" value="P:phosphorelay signal transduction system"/>
    <property type="evidence" value="ECO:0007669"/>
    <property type="project" value="UniProtKB-KW"/>
</dbReference>
<dbReference type="GO" id="GO:0006355">
    <property type="term" value="P:regulation of DNA-templated transcription"/>
    <property type="evidence" value="ECO:0007669"/>
    <property type="project" value="InterPro"/>
</dbReference>
<dbReference type="CDD" id="cd00009">
    <property type="entry name" value="AAA"/>
    <property type="match status" value="1"/>
</dbReference>
<dbReference type="FunFam" id="3.40.50.2300:FF:000120">
    <property type="entry name" value="Alginate biosynthesis transcriptional regulator AlgB"/>
    <property type="match status" value="1"/>
</dbReference>
<dbReference type="FunFam" id="3.40.50.300:FF:000006">
    <property type="entry name" value="DNA-binding transcriptional regulator NtrC"/>
    <property type="match status" value="1"/>
</dbReference>
<dbReference type="Gene3D" id="1.10.8.60">
    <property type="match status" value="1"/>
</dbReference>
<dbReference type="Gene3D" id="3.40.50.2300">
    <property type="match status" value="1"/>
</dbReference>
<dbReference type="Gene3D" id="1.10.10.60">
    <property type="entry name" value="Homeodomain-like"/>
    <property type="match status" value="1"/>
</dbReference>
<dbReference type="Gene3D" id="3.40.50.300">
    <property type="entry name" value="P-loop containing nucleotide triphosphate hydrolases"/>
    <property type="match status" value="1"/>
</dbReference>
<dbReference type="InterPro" id="IPR003593">
    <property type="entry name" value="AAA+_ATPase"/>
</dbReference>
<dbReference type="InterPro" id="IPR011006">
    <property type="entry name" value="CheY-like_superfamily"/>
</dbReference>
<dbReference type="InterPro" id="IPR009057">
    <property type="entry name" value="Homeodomain-like_sf"/>
</dbReference>
<dbReference type="InterPro" id="IPR002197">
    <property type="entry name" value="HTH_Fis"/>
</dbReference>
<dbReference type="InterPro" id="IPR027417">
    <property type="entry name" value="P-loop_NTPase"/>
</dbReference>
<dbReference type="InterPro" id="IPR001789">
    <property type="entry name" value="Sig_transdc_resp-reg_receiver"/>
</dbReference>
<dbReference type="InterPro" id="IPR002078">
    <property type="entry name" value="Sigma_54_int"/>
</dbReference>
<dbReference type="InterPro" id="IPR025662">
    <property type="entry name" value="Sigma_54_int_dom_ATP-bd_1"/>
</dbReference>
<dbReference type="InterPro" id="IPR025943">
    <property type="entry name" value="Sigma_54_int_dom_ATP-bd_2"/>
</dbReference>
<dbReference type="InterPro" id="IPR025944">
    <property type="entry name" value="Sigma_54_int_dom_CS"/>
</dbReference>
<dbReference type="PANTHER" id="PTHR32071:SF113">
    <property type="entry name" value="ALGINATE BIOSYNTHESIS TRANSCRIPTIONAL REGULATORY PROTEIN ALGB"/>
    <property type="match status" value="1"/>
</dbReference>
<dbReference type="PANTHER" id="PTHR32071">
    <property type="entry name" value="TRANSCRIPTIONAL REGULATORY PROTEIN"/>
    <property type="match status" value="1"/>
</dbReference>
<dbReference type="Pfam" id="PF02954">
    <property type="entry name" value="HTH_8"/>
    <property type="match status" value="1"/>
</dbReference>
<dbReference type="Pfam" id="PF00072">
    <property type="entry name" value="Response_reg"/>
    <property type="match status" value="1"/>
</dbReference>
<dbReference type="Pfam" id="PF00158">
    <property type="entry name" value="Sigma54_activat"/>
    <property type="match status" value="1"/>
</dbReference>
<dbReference type="SMART" id="SM00382">
    <property type="entry name" value="AAA"/>
    <property type="match status" value="1"/>
</dbReference>
<dbReference type="SMART" id="SM00448">
    <property type="entry name" value="REC"/>
    <property type="match status" value="1"/>
</dbReference>
<dbReference type="SUPFAM" id="SSF52172">
    <property type="entry name" value="CheY-like"/>
    <property type="match status" value="1"/>
</dbReference>
<dbReference type="SUPFAM" id="SSF46689">
    <property type="entry name" value="Homeodomain-like"/>
    <property type="match status" value="1"/>
</dbReference>
<dbReference type="SUPFAM" id="SSF52540">
    <property type="entry name" value="P-loop containing nucleoside triphosphate hydrolases"/>
    <property type="match status" value="1"/>
</dbReference>
<dbReference type="PROSITE" id="PS50110">
    <property type="entry name" value="RESPONSE_REGULATORY"/>
    <property type="match status" value="1"/>
</dbReference>
<dbReference type="PROSITE" id="PS00675">
    <property type="entry name" value="SIGMA54_INTERACT_1"/>
    <property type="match status" value="1"/>
</dbReference>
<dbReference type="PROSITE" id="PS00676">
    <property type="entry name" value="SIGMA54_INTERACT_2"/>
    <property type="match status" value="1"/>
</dbReference>
<dbReference type="PROSITE" id="PS00688">
    <property type="entry name" value="SIGMA54_INTERACT_3"/>
    <property type="match status" value="1"/>
</dbReference>
<dbReference type="PROSITE" id="PS50045">
    <property type="entry name" value="SIGMA54_INTERACT_4"/>
    <property type="match status" value="1"/>
</dbReference>
<gene>
    <name type="primary">algB</name>
    <name type="ordered locus">PP_0133</name>
</gene>
<sequence>MESAQDNQGRILLVDDESAILRTFRYCLEDEGYSVATANSAAQAETLLQRQVFDLCFLDLRLGEDNGLDVLAQMRIQAPWMRVVIVTAHSAIDTAVDAIQAGAADYLVKPCSPDQLRLATAKQLEVRQLSARLEALEGEIRKPKDGLDSHSPAMMAVLETARQVAITDANILILGESGTGKGELARAIHGWSKRARKACVTINCPSLNAELMESELFGHTRGAFTGASESTLGRVSQADGGTLFLDEIGDFPLTLQPKLLRFIQDKEYERVGDPVTRRADVRILAATNLNLEEMVRESRFREDLLYRLNVITLHLPPLRERSEDILILADRFLARFVKEYSRPARGFSDEARTALLNYRWPGNIRELRNVVERASIICPQERVEISHLGMGEQPAGSAPRVGAALSLDELERAHIGAVLAASDTLDQAAKTLGIDASTLYRKRKQYNL</sequence>
<organism>
    <name type="scientific">Pseudomonas putida (strain ATCC 47054 / DSM 6125 / CFBP 8728 / NCIMB 11950 / KT2440)</name>
    <dbReference type="NCBI Taxonomy" id="160488"/>
    <lineage>
        <taxon>Bacteria</taxon>
        <taxon>Pseudomonadati</taxon>
        <taxon>Pseudomonadota</taxon>
        <taxon>Gammaproteobacteria</taxon>
        <taxon>Pseudomonadales</taxon>
        <taxon>Pseudomonadaceae</taxon>
        <taxon>Pseudomonas</taxon>
    </lineage>
</organism>
<feature type="chain" id="PRO_0000081005" description="Alginate biosynthesis transcriptional regulatory protein AlgB">
    <location>
        <begin position="1"/>
        <end position="448"/>
    </location>
</feature>
<feature type="domain" description="Response regulatory" evidence="2">
    <location>
        <begin position="10"/>
        <end position="124"/>
    </location>
</feature>
<feature type="domain" description="Sigma-54 factor interaction" evidence="3">
    <location>
        <begin position="147"/>
        <end position="376"/>
    </location>
</feature>
<feature type="DNA-binding region" description="H-T-H motif" evidence="1">
    <location>
        <begin position="425"/>
        <end position="444"/>
    </location>
</feature>
<feature type="binding site" evidence="3">
    <location>
        <begin position="175"/>
        <end position="182"/>
    </location>
    <ligand>
        <name>ATP</name>
        <dbReference type="ChEBI" id="CHEBI:30616"/>
    </ligand>
</feature>
<feature type="binding site" evidence="3">
    <location>
        <begin position="238"/>
        <end position="247"/>
    </location>
    <ligand>
        <name>ATP</name>
        <dbReference type="ChEBI" id="CHEBI:30616"/>
    </ligand>
</feature>
<feature type="modified residue" description="4-aspartylphosphate" evidence="2">
    <location>
        <position position="59"/>
    </location>
</feature>
<evidence type="ECO:0000250" key="1"/>
<evidence type="ECO:0000255" key="2">
    <source>
        <dbReference type="PROSITE-ProRule" id="PRU00169"/>
    </source>
</evidence>
<evidence type="ECO:0000255" key="3">
    <source>
        <dbReference type="PROSITE-ProRule" id="PRU00193"/>
    </source>
</evidence>
<protein>
    <recommendedName>
        <fullName>Alginate biosynthesis transcriptional regulatory protein AlgB</fullName>
    </recommendedName>
</protein>
<comment type="function">
    <text>Positive regulator of the alginate biosynthetic gene algD.</text>
</comment>
<comment type="pathway">
    <text>Glycan biosynthesis; alginate biosynthesis [regulation].</text>
</comment>
<accession>Q88RJ6</accession>
<name>ALGB_PSEPK</name>
<reference key="1">
    <citation type="journal article" date="2002" name="Environ. Microbiol.">
        <title>Complete genome sequence and comparative analysis of the metabolically versatile Pseudomonas putida KT2440.</title>
        <authorList>
            <person name="Nelson K.E."/>
            <person name="Weinel C."/>
            <person name="Paulsen I.T."/>
            <person name="Dodson R.J."/>
            <person name="Hilbert H."/>
            <person name="Martins dos Santos V.A.P."/>
            <person name="Fouts D.E."/>
            <person name="Gill S.R."/>
            <person name="Pop M."/>
            <person name="Holmes M."/>
            <person name="Brinkac L.M."/>
            <person name="Beanan M.J."/>
            <person name="DeBoy R.T."/>
            <person name="Daugherty S.C."/>
            <person name="Kolonay J.F."/>
            <person name="Madupu R."/>
            <person name="Nelson W.C."/>
            <person name="White O."/>
            <person name="Peterson J.D."/>
            <person name="Khouri H.M."/>
            <person name="Hance I."/>
            <person name="Chris Lee P."/>
            <person name="Holtzapple E.K."/>
            <person name="Scanlan D."/>
            <person name="Tran K."/>
            <person name="Moazzez A."/>
            <person name="Utterback T.R."/>
            <person name="Rizzo M."/>
            <person name="Lee K."/>
            <person name="Kosack D."/>
            <person name="Moestl D."/>
            <person name="Wedler H."/>
            <person name="Lauber J."/>
            <person name="Stjepandic D."/>
            <person name="Hoheisel J."/>
            <person name="Straetz M."/>
            <person name="Heim S."/>
            <person name="Kiewitz C."/>
            <person name="Eisen J.A."/>
            <person name="Timmis K.N."/>
            <person name="Duesterhoeft A."/>
            <person name="Tuemmler B."/>
            <person name="Fraser C.M."/>
        </authorList>
    </citation>
    <scope>NUCLEOTIDE SEQUENCE [LARGE SCALE GENOMIC DNA]</scope>
    <source>
        <strain>ATCC 47054 / DSM 6125 / CFBP 8728 / NCIMB 11950 / KT2440</strain>
    </source>
</reference>
<keyword id="KW-0010">Activator</keyword>
<keyword id="KW-0016">Alginate biosynthesis</keyword>
<keyword id="KW-0067">ATP-binding</keyword>
<keyword id="KW-0238">DNA-binding</keyword>
<keyword id="KW-0547">Nucleotide-binding</keyword>
<keyword id="KW-0597">Phosphoprotein</keyword>
<keyword id="KW-1185">Reference proteome</keyword>
<keyword id="KW-0804">Transcription</keyword>
<keyword id="KW-0805">Transcription regulation</keyword>
<keyword id="KW-0902">Two-component regulatory system</keyword>